<comment type="similarity">
    <text evidence="1">Belongs to the bacterial ribosomal protein bL33 family.</text>
</comment>
<dbReference type="EMBL" id="AP009152">
    <property type="protein sequence ID" value="BAG28708.1"/>
    <property type="molecule type" value="Genomic_DNA"/>
</dbReference>
<dbReference type="RefSeq" id="WP_012397435.1">
    <property type="nucleotide sequence ID" value="NZ_VECX01000002.1"/>
</dbReference>
<dbReference type="SMR" id="B2GG85"/>
<dbReference type="STRING" id="378753.KRH_03610"/>
<dbReference type="GeneID" id="93241305"/>
<dbReference type="KEGG" id="krh:KRH_03610"/>
<dbReference type="eggNOG" id="COG0267">
    <property type="taxonomic scope" value="Bacteria"/>
</dbReference>
<dbReference type="HOGENOM" id="CLU_190949_1_1_11"/>
<dbReference type="OrthoDB" id="21586at2"/>
<dbReference type="Proteomes" id="UP000008838">
    <property type="component" value="Chromosome"/>
</dbReference>
<dbReference type="GO" id="GO:0022625">
    <property type="term" value="C:cytosolic large ribosomal subunit"/>
    <property type="evidence" value="ECO:0007669"/>
    <property type="project" value="TreeGrafter"/>
</dbReference>
<dbReference type="GO" id="GO:0003735">
    <property type="term" value="F:structural constituent of ribosome"/>
    <property type="evidence" value="ECO:0007669"/>
    <property type="project" value="InterPro"/>
</dbReference>
<dbReference type="GO" id="GO:0006412">
    <property type="term" value="P:translation"/>
    <property type="evidence" value="ECO:0007669"/>
    <property type="project" value="UniProtKB-UniRule"/>
</dbReference>
<dbReference type="FunFam" id="2.20.28.120:FF:000002">
    <property type="entry name" value="50S ribosomal protein L33"/>
    <property type="match status" value="1"/>
</dbReference>
<dbReference type="Gene3D" id="2.20.28.120">
    <property type="entry name" value="Ribosomal protein L33"/>
    <property type="match status" value="1"/>
</dbReference>
<dbReference type="HAMAP" id="MF_00294">
    <property type="entry name" value="Ribosomal_bL33"/>
    <property type="match status" value="1"/>
</dbReference>
<dbReference type="InterPro" id="IPR001705">
    <property type="entry name" value="Ribosomal_bL33"/>
</dbReference>
<dbReference type="InterPro" id="IPR018264">
    <property type="entry name" value="Ribosomal_bL33_CS"/>
</dbReference>
<dbReference type="InterPro" id="IPR038584">
    <property type="entry name" value="Ribosomal_bL33_sf"/>
</dbReference>
<dbReference type="InterPro" id="IPR011332">
    <property type="entry name" value="Ribosomal_zn-bd"/>
</dbReference>
<dbReference type="NCBIfam" id="NF001860">
    <property type="entry name" value="PRK00595.1"/>
    <property type="match status" value="1"/>
</dbReference>
<dbReference type="NCBIfam" id="TIGR01023">
    <property type="entry name" value="rpmG_bact"/>
    <property type="match status" value="1"/>
</dbReference>
<dbReference type="PANTHER" id="PTHR15238">
    <property type="entry name" value="54S RIBOSOMAL PROTEIN L39, MITOCHONDRIAL"/>
    <property type="match status" value="1"/>
</dbReference>
<dbReference type="PANTHER" id="PTHR15238:SF1">
    <property type="entry name" value="LARGE RIBOSOMAL SUBUNIT PROTEIN BL33M"/>
    <property type="match status" value="1"/>
</dbReference>
<dbReference type="Pfam" id="PF00471">
    <property type="entry name" value="Ribosomal_L33"/>
    <property type="match status" value="1"/>
</dbReference>
<dbReference type="SUPFAM" id="SSF57829">
    <property type="entry name" value="Zn-binding ribosomal proteins"/>
    <property type="match status" value="1"/>
</dbReference>
<dbReference type="PROSITE" id="PS00582">
    <property type="entry name" value="RIBOSOMAL_L33"/>
    <property type="match status" value="1"/>
</dbReference>
<sequence length="55" mass="6576">MAKDKDVRPIIKLKSTAGTGFTYVTRKNRRNNPDRLVMKKYDPVVRKHVDFREER</sequence>
<feature type="chain" id="PRO_1000115137" description="Large ribosomal subunit protein bL33">
    <location>
        <begin position="1"/>
        <end position="55"/>
    </location>
</feature>
<accession>B2GG85</accession>
<organism>
    <name type="scientific">Kocuria rhizophila (strain ATCC 9341 / DSM 348 / NBRC 103217 / DC2201)</name>
    <dbReference type="NCBI Taxonomy" id="378753"/>
    <lineage>
        <taxon>Bacteria</taxon>
        <taxon>Bacillati</taxon>
        <taxon>Actinomycetota</taxon>
        <taxon>Actinomycetes</taxon>
        <taxon>Micrococcales</taxon>
        <taxon>Micrococcaceae</taxon>
        <taxon>Kocuria</taxon>
    </lineage>
</organism>
<evidence type="ECO:0000255" key="1">
    <source>
        <dbReference type="HAMAP-Rule" id="MF_00294"/>
    </source>
</evidence>
<evidence type="ECO:0000305" key="2"/>
<gene>
    <name evidence="1" type="primary">rpmG</name>
    <name type="ordered locus">KRH_03610</name>
</gene>
<name>RL33_KOCRD</name>
<proteinExistence type="inferred from homology"/>
<protein>
    <recommendedName>
        <fullName evidence="1">Large ribosomal subunit protein bL33</fullName>
    </recommendedName>
    <alternativeName>
        <fullName evidence="2">50S ribosomal protein L33</fullName>
    </alternativeName>
</protein>
<keyword id="KW-1185">Reference proteome</keyword>
<keyword id="KW-0687">Ribonucleoprotein</keyword>
<keyword id="KW-0689">Ribosomal protein</keyword>
<reference key="1">
    <citation type="journal article" date="2008" name="J. Bacteriol.">
        <title>Complete genome sequence of the soil actinomycete Kocuria rhizophila.</title>
        <authorList>
            <person name="Takarada H."/>
            <person name="Sekine M."/>
            <person name="Kosugi H."/>
            <person name="Matsuo Y."/>
            <person name="Fujisawa T."/>
            <person name="Omata S."/>
            <person name="Kishi E."/>
            <person name="Shimizu A."/>
            <person name="Tsukatani N."/>
            <person name="Tanikawa S."/>
            <person name="Fujita N."/>
            <person name="Harayama S."/>
        </authorList>
    </citation>
    <scope>NUCLEOTIDE SEQUENCE [LARGE SCALE GENOMIC DNA]</scope>
    <source>
        <strain>ATCC 9341 / DSM 348 / NBRC 103217 / DC2201</strain>
    </source>
</reference>